<comment type="subcellular location">
    <subcellularLocation>
        <location evidence="3">Mitochondrion membrane</location>
        <topology evidence="3">Single-pass membrane protein</topology>
    </subcellularLocation>
</comment>
<comment type="disruption phenotype">
    <text evidence="2">Increases frequency of mitochondrial genome loss.</text>
</comment>
<comment type="similarity">
    <text evidence="3">Belongs to the AIM39 family.</text>
</comment>
<comment type="sequence caution" evidence="3">
    <conflict type="frameshift">
        <sequence resource="EMBL-CDS" id="CAA62535"/>
    </conflict>
</comment>
<protein>
    <recommendedName>
        <fullName>Altered inheritance of mitochondria protein 39, mitochondrial</fullName>
    </recommendedName>
</protein>
<keyword id="KW-0472">Membrane</keyword>
<keyword id="KW-0496">Mitochondrion</keyword>
<keyword id="KW-1185">Reference proteome</keyword>
<keyword id="KW-0809">Transit peptide</keyword>
<keyword id="KW-0812">Transmembrane</keyword>
<keyword id="KW-1133">Transmembrane helix</keyword>
<gene>
    <name type="primary">AIM39</name>
    <name type="ordered locus">YOL053W</name>
    <name type="ORF">O1269</name>
</gene>
<organism>
    <name type="scientific">Saccharomyces cerevisiae (strain ATCC 204508 / S288c)</name>
    <name type="common">Baker's yeast</name>
    <dbReference type="NCBI Taxonomy" id="559292"/>
    <lineage>
        <taxon>Eukaryota</taxon>
        <taxon>Fungi</taxon>
        <taxon>Dikarya</taxon>
        <taxon>Ascomycota</taxon>
        <taxon>Saccharomycotina</taxon>
        <taxon>Saccharomycetes</taxon>
        <taxon>Saccharomycetales</taxon>
        <taxon>Saccharomycetaceae</taxon>
        <taxon>Saccharomyces</taxon>
    </lineage>
</organism>
<accession>Q08223</accession>
<accession>D6W214</accession>
<accession>Q05667</accession>
<sequence>MWGLCKKHFPSNKIQVQERNKALKPKKSGSEHKTKQLFPVFNCKKKEKGVMIRFAILRNANTSLLSARSICLFTQAPTYCHVRLNTLNKSITTKRNSLTESKRHVHDGKHFFTTPHQQQQTKLGEIEEGHSPNIKGEDLRSIGQAITHQRNKRRKQIWSAIFGGIFGVILGYSLIYRVIYLKEQSFLPLFPSSKIRKLSTRDLKKVDVNQVQKLSKLRVLEILSGHDMIKEQYGVPLLDKDGNSPTLNEFSMWCEDQDPCVTGIVMEPDDKRDSSHTWYRIPFVCKWRITHRPISIRGTIDDLLNRIGLETADLFEIISPERVYGSFKYEYPLQGDSHALHLWFHGEIELDDDSLIVYNGKYHVDVKLQEIDLFRREKNGQLIQYVLYKNEAGDK</sequence>
<proteinExistence type="inferred from homology"/>
<dbReference type="EMBL" id="X91067">
    <property type="protein sequence ID" value="CAA62535.1"/>
    <property type="status" value="ALT_FRAME"/>
    <property type="molecule type" value="Genomic_DNA"/>
</dbReference>
<dbReference type="EMBL" id="Z74795">
    <property type="protein sequence ID" value="CAA99060.1"/>
    <property type="molecule type" value="Genomic_DNA"/>
</dbReference>
<dbReference type="EMBL" id="BK006948">
    <property type="protein sequence ID" value="DAA10730.1"/>
    <property type="molecule type" value="Genomic_DNA"/>
</dbReference>
<dbReference type="PIR" id="S66738">
    <property type="entry name" value="S66738"/>
</dbReference>
<dbReference type="RefSeq" id="NP_014588.1">
    <property type="nucleotide sequence ID" value="NM_001183308.1"/>
</dbReference>
<dbReference type="SMR" id="Q08223"/>
<dbReference type="BioGRID" id="34350">
    <property type="interactions" value="153"/>
</dbReference>
<dbReference type="FunCoup" id="Q08223">
    <property type="interactions" value="48"/>
</dbReference>
<dbReference type="STRING" id="4932.YOL053W"/>
<dbReference type="PaxDb" id="4932-YOL053W"/>
<dbReference type="PeptideAtlas" id="Q08223"/>
<dbReference type="EnsemblFungi" id="YOL053W_mRNA">
    <property type="protein sequence ID" value="YOL053W"/>
    <property type="gene ID" value="YOL053W"/>
</dbReference>
<dbReference type="GeneID" id="854103"/>
<dbReference type="KEGG" id="sce:YOL053W"/>
<dbReference type="AGR" id="SGD:S000005414"/>
<dbReference type="SGD" id="S000005414">
    <property type="gene designation" value="AIM39"/>
</dbReference>
<dbReference type="VEuPathDB" id="FungiDB:YOL053W"/>
<dbReference type="eggNOG" id="ENOG502QT12">
    <property type="taxonomic scope" value="Eukaryota"/>
</dbReference>
<dbReference type="HOGENOM" id="CLU_058942_0_0_1"/>
<dbReference type="InParanoid" id="Q08223"/>
<dbReference type="OMA" id="WCEDQDP"/>
<dbReference type="OrthoDB" id="4058511at2759"/>
<dbReference type="BioCyc" id="YEAST:G3O-33464-MONOMER"/>
<dbReference type="BioGRID-ORCS" id="854103">
    <property type="hits" value="0 hits in 10 CRISPR screens"/>
</dbReference>
<dbReference type="PRO" id="PR:Q08223"/>
<dbReference type="Proteomes" id="UP000002311">
    <property type="component" value="Chromosome XV"/>
</dbReference>
<dbReference type="RNAct" id="Q08223">
    <property type="molecule type" value="protein"/>
</dbReference>
<dbReference type="GO" id="GO:0005829">
    <property type="term" value="C:cytosol"/>
    <property type="evidence" value="ECO:0007005"/>
    <property type="project" value="SGD"/>
</dbReference>
<dbReference type="GO" id="GO:0031966">
    <property type="term" value="C:mitochondrial membrane"/>
    <property type="evidence" value="ECO:0007669"/>
    <property type="project" value="UniProtKB-SubCell"/>
</dbReference>
<dbReference type="GO" id="GO:0005739">
    <property type="term" value="C:mitochondrion"/>
    <property type="evidence" value="ECO:0007005"/>
    <property type="project" value="SGD"/>
</dbReference>
<dbReference type="GO" id="GO:0005777">
    <property type="term" value="C:peroxisome"/>
    <property type="evidence" value="ECO:0007005"/>
    <property type="project" value="SGD"/>
</dbReference>
<name>AIM39_YEAST</name>
<feature type="transit peptide" description="Mitochondrion" evidence="1">
    <location>
        <begin position="1"/>
        <end status="unknown"/>
    </location>
</feature>
<feature type="chain" id="PRO_0000235924" description="Altered inheritance of mitochondria protein 39, mitochondrial">
    <location>
        <begin status="unknown"/>
        <end position="395"/>
    </location>
</feature>
<feature type="transmembrane region" description="Helical" evidence="1">
    <location>
        <begin position="156"/>
        <end position="176"/>
    </location>
</feature>
<evidence type="ECO:0000255" key="1"/>
<evidence type="ECO:0000269" key="2">
    <source>
    </source>
</evidence>
<evidence type="ECO:0000305" key="3"/>
<reference key="1">
    <citation type="journal article" date="1996" name="Yeast">
        <title>Analysis of a 26 kb region on the left arm of yeast chromosome XV.</title>
        <authorList>
            <person name="Mannhaupt G."/>
            <person name="Vetter I."/>
            <person name="Schwarzlose C."/>
            <person name="Mitzel S."/>
            <person name="Feldmann H."/>
        </authorList>
    </citation>
    <scope>NUCLEOTIDE SEQUENCE [GENOMIC DNA]</scope>
    <source>
        <strain>ATCC 96604 / S288c / FY1679</strain>
    </source>
</reference>
<reference key="2">
    <citation type="journal article" date="1997" name="Nature">
        <title>The nucleotide sequence of Saccharomyces cerevisiae chromosome XV.</title>
        <authorList>
            <person name="Dujon B."/>
            <person name="Albermann K."/>
            <person name="Aldea M."/>
            <person name="Alexandraki D."/>
            <person name="Ansorge W."/>
            <person name="Arino J."/>
            <person name="Benes V."/>
            <person name="Bohn C."/>
            <person name="Bolotin-Fukuhara M."/>
            <person name="Bordonne R."/>
            <person name="Boyer J."/>
            <person name="Camasses A."/>
            <person name="Casamayor A."/>
            <person name="Casas C."/>
            <person name="Cheret G."/>
            <person name="Cziepluch C."/>
            <person name="Daignan-Fornier B."/>
            <person name="Dang V.-D."/>
            <person name="de Haan M."/>
            <person name="Delius H."/>
            <person name="Durand P."/>
            <person name="Fairhead C."/>
            <person name="Feldmann H."/>
            <person name="Gaillon L."/>
            <person name="Galisson F."/>
            <person name="Gamo F.-J."/>
            <person name="Gancedo C."/>
            <person name="Goffeau A."/>
            <person name="Goulding S.E."/>
            <person name="Grivell L.A."/>
            <person name="Habbig B."/>
            <person name="Hand N.J."/>
            <person name="Hani J."/>
            <person name="Hattenhorst U."/>
            <person name="Hebling U."/>
            <person name="Hernando Y."/>
            <person name="Herrero E."/>
            <person name="Heumann K."/>
            <person name="Hiesel R."/>
            <person name="Hilger F."/>
            <person name="Hofmann B."/>
            <person name="Hollenberg C.P."/>
            <person name="Hughes B."/>
            <person name="Jauniaux J.-C."/>
            <person name="Kalogeropoulos A."/>
            <person name="Katsoulou C."/>
            <person name="Kordes E."/>
            <person name="Lafuente M.J."/>
            <person name="Landt O."/>
            <person name="Louis E.J."/>
            <person name="Maarse A.C."/>
            <person name="Madania A."/>
            <person name="Mannhaupt G."/>
            <person name="Marck C."/>
            <person name="Martin R.P."/>
            <person name="Mewes H.-W."/>
            <person name="Michaux G."/>
            <person name="Paces V."/>
            <person name="Parle-McDermott A.G."/>
            <person name="Pearson B.M."/>
            <person name="Perrin A."/>
            <person name="Pettersson B."/>
            <person name="Poch O."/>
            <person name="Pohl T.M."/>
            <person name="Poirey R."/>
            <person name="Portetelle D."/>
            <person name="Pujol A."/>
            <person name="Purnelle B."/>
            <person name="Ramezani Rad M."/>
            <person name="Rechmann S."/>
            <person name="Schwager C."/>
            <person name="Schweizer M."/>
            <person name="Sor F."/>
            <person name="Sterky F."/>
            <person name="Tarassov I.A."/>
            <person name="Teodoru C."/>
            <person name="Tettelin H."/>
            <person name="Thierry A."/>
            <person name="Tobiasch E."/>
            <person name="Tzermia M."/>
            <person name="Uhlen M."/>
            <person name="Unseld M."/>
            <person name="Valens M."/>
            <person name="Vandenbol M."/>
            <person name="Vetter I."/>
            <person name="Vlcek C."/>
            <person name="Voet M."/>
            <person name="Volckaert G."/>
            <person name="Voss H."/>
            <person name="Wambutt R."/>
            <person name="Wedler H."/>
            <person name="Wiemann S."/>
            <person name="Winsor B."/>
            <person name="Wolfe K.H."/>
            <person name="Zollner A."/>
            <person name="Zumstein E."/>
            <person name="Kleine K."/>
        </authorList>
    </citation>
    <scope>NUCLEOTIDE SEQUENCE [LARGE SCALE GENOMIC DNA]</scope>
    <source>
        <strain>ATCC 204508 / S288c</strain>
    </source>
</reference>
<reference key="3">
    <citation type="journal article" date="2014" name="G3 (Bethesda)">
        <title>The reference genome sequence of Saccharomyces cerevisiae: Then and now.</title>
        <authorList>
            <person name="Engel S.R."/>
            <person name="Dietrich F.S."/>
            <person name="Fisk D.G."/>
            <person name="Binkley G."/>
            <person name="Balakrishnan R."/>
            <person name="Costanzo M.C."/>
            <person name="Dwight S.S."/>
            <person name="Hitz B.C."/>
            <person name="Karra K."/>
            <person name="Nash R.S."/>
            <person name="Weng S."/>
            <person name="Wong E.D."/>
            <person name="Lloyd P."/>
            <person name="Skrzypek M.S."/>
            <person name="Miyasato S.R."/>
            <person name="Simison M."/>
            <person name="Cherry J.M."/>
        </authorList>
    </citation>
    <scope>GENOME REANNOTATION</scope>
    <source>
        <strain>ATCC 204508 / S288c</strain>
    </source>
</reference>
<reference key="4">
    <citation type="journal article" date="2009" name="PLoS Genet.">
        <title>Computationally driven, quantitative experiments discover genes required for mitochondrial biogenesis.</title>
        <authorList>
            <person name="Hess D.C."/>
            <person name="Myers C.L."/>
            <person name="Huttenhower C."/>
            <person name="Hibbs M.A."/>
            <person name="Hayes A.P."/>
            <person name="Paw J."/>
            <person name="Clore J.J."/>
            <person name="Mendoza R.M."/>
            <person name="Luis B.S."/>
            <person name="Nislow C."/>
            <person name="Giaever G."/>
            <person name="Costanzo M."/>
            <person name="Troyanskaya O.G."/>
            <person name="Caudy A.A."/>
        </authorList>
    </citation>
    <scope>DISRUPTION PHENOTYPE</scope>
</reference>